<reference key="1">
    <citation type="journal article" date="2005" name="Science">
        <title>Life at depth: Photobacterium profundum genome sequence and expression analysis.</title>
        <authorList>
            <person name="Vezzi A."/>
            <person name="Campanaro S."/>
            <person name="D'Angelo M."/>
            <person name="Simonato F."/>
            <person name="Vitulo N."/>
            <person name="Lauro F.M."/>
            <person name="Cestaro A."/>
            <person name="Malacrida G."/>
            <person name="Simionati B."/>
            <person name="Cannata N."/>
            <person name="Romualdi C."/>
            <person name="Bartlett D.H."/>
            <person name="Valle G."/>
        </authorList>
    </citation>
    <scope>NUCLEOTIDE SEQUENCE [LARGE SCALE GENOMIC DNA]</scope>
    <source>
        <strain>ATCC BAA-1253 / SS9</strain>
    </source>
</reference>
<name>COAD_PHOPR</name>
<sequence length="161" mass="17807">MTTRVIYPGTFDPITNGHLDLIERAAAMFDHVVVGIAASPSKKPLFDLPERVALTQAITKHLPNVEIVGFSGLLVDFAKESNANILVRGLRAVSDFEYEFQLANMNRRLMPELETVFLTPSEENSFISSTIVKEVALHKGDVSQFVDLRITGALNAKLHTK</sequence>
<organism>
    <name type="scientific">Photobacterium profundum (strain SS9)</name>
    <dbReference type="NCBI Taxonomy" id="298386"/>
    <lineage>
        <taxon>Bacteria</taxon>
        <taxon>Pseudomonadati</taxon>
        <taxon>Pseudomonadota</taxon>
        <taxon>Gammaproteobacteria</taxon>
        <taxon>Vibrionales</taxon>
        <taxon>Vibrionaceae</taxon>
        <taxon>Photobacterium</taxon>
    </lineage>
</organism>
<keyword id="KW-0067">ATP-binding</keyword>
<keyword id="KW-0173">Coenzyme A biosynthesis</keyword>
<keyword id="KW-0963">Cytoplasm</keyword>
<keyword id="KW-0460">Magnesium</keyword>
<keyword id="KW-0547">Nucleotide-binding</keyword>
<keyword id="KW-0548">Nucleotidyltransferase</keyword>
<keyword id="KW-1185">Reference proteome</keyword>
<keyword id="KW-0808">Transferase</keyword>
<dbReference type="EC" id="2.7.7.3" evidence="1"/>
<dbReference type="EMBL" id="CR378663">
    <property type="protein sequence ID" value="CAG18647.1"/>
    <property type="status" value="ALT_INIT"/>
    <property type="molecule type" value="Genomic_DNA"/>
</dbReference>
<dbReference type="RefSeq" id="WP_006233204.1">
    <property type="nucleotide sequence ID" value="NC_006370.1"/>
</dbReference>
<dbReference type="SMR" id="Q6LVM8"/>
<dbReference type="STRING" id="298386.PBPRA0208"/>
<dbReference type="KEGG" id="ppr:PBPRA0208"/>
<dbReference type="eggNOG" id="COG0669">
    <property type="taxonomic scope" value="Bacteria"/>
</dbReference>
<dbReference type="HOGENOM" id="CLU_100149_0_1_6"/>
<dbReference type="UniPathway" id="UPA00241">
    <property type="reaction ID" value="UER00355"/>
</dbReference>
<dbReference type="Proteomes" id="UP000000593">
    <property type="component" value="Chromosome 1"/>
</dbReference>
<dbReference type="GO" id="GO:0005737">
    <property type="term" value="C:cytoplasm"/>
    <property type="evidence" value="ECO:0007669"/>
    <property type="project" value="UniProtKB-SubCell"/>
</dbReference>
<dbReference type="GO" id="GO:0005524">
    <property type="term" value="F:ATP binding"/>
    <property type="evidence" value="ECO:0007669"/>
    <property type="project" value="UniProtKB-KW"/>
</dbReference>
<dbReference type="GO" id="GO:0004595">
    <property type="term" value="F:pantetheine-phosphate adenylyltransferase activity"/>
    <property type="evidence" value="ECO:0007669"/>
    <property type="project" value="UniProtKB-UniRule"/>
</dbReference>
<dbReference type="GO" id="GO:0015937">
    <property type="term" value="P:coenzyme A biosynthetic process"/>
    <property type="evidence" value="ECO:0007669"/>
    <property type="project" value="UniProtKB-UniRule"/>
</dbReference>
<dbReference type="CDD" id="cd02163">
    <property type="entry name" value="PPAT"/>
    <property type="match status" value="1"/>
</dbReference>
<dbReference type="FunFam" id="3.40.50.620:FF:000012">
    <property type="entry name" value="Phosphopantetheine adenylyltransferase"/>
    <property type="match status" value="1"/>
</dbReference>
<dbReference type="Gene3D" id="3.40.50.620">
    <property type="entry name" value="HUPs"/>
    <property type="match status" value="1"/>
</dbReference>
<dbReference type="HAMAP" id="MF_00151">
    <property type="entry name" value="PPAT_bact"/>
    <property type="match status" value="1"/>
</dbReference>
<dbReference type="InterPro" id="IPR004821">
    <property type="entry name" value="Cyt_trans-like"/>
</dbReference>
<dbReference type="InterPro" id="IPR001980">
    <property type="entry name" value="PPAT"/>
</dbReference>
<dbReference type="InterPro" id="IPR014729">
    <property type="entry name" value="Rossmann-like_a/b/a_fold"/>
</dbReference>
<dbReference type="NCBIfam" id="TIGR01510">
    <property type="entry name" value="coaD_prev_kdtB"/>
    <property type="match status" value="1"/>
</dbReference>
<dbReference type="NCBIfam" id="TIGR00125">
    <property type="entry name" value="cyt_tran_rel"/>
    <property type="match status" value="1"/>
</dbReference>
<dbReference type="PANTHER" id="PTHR21342">
    <property type="entry name" value="PHOSPHOPANTETHEINE ADENYLYLTRANSFERASE"/>
    <property type="match status" value="1"/>
</dbReference>
<dbReference type="PANTHER" id="PTHR21342:SF1">
    <property type="entry name" value="PHOSPHOPANTETHEINE ADENYLYLTRANSFERASE"/>
    <property type="match status" value="1"/>
</dbReference>
<dbReference type="Pfam" id="PF01467">
    <property type="entry name" value="CTP_transf_like"/>
    <property type="match status" value="1"/>
</dbReference>
<dbReference type="PRINTS" id="PR01020">
    <property type="entry name" value="LPSBIOSNTHSS"/>
</dbReference>
<dbReference type="SUPFAM" id="SSF52374">
    <property type="entry name" value="Nucleotidylyl transferase"/>
    <property type="match status" value="1"/>
</dbReference>
<gene>
    <name evidence="1" type="primary">coaD</name>
    <name type="ordered locus">PBPRA0208</name>
</gene>
<comment type="function">
    <text evidence="1">Reversibly transfers an adenylyl group from ATP to 4'-phosphopantetheine, yielding dephospho-CoA (dPCoA) and pyrophosphate.</text>
</comment>
<comment type="catalytic activity">
    <reaction evidence="1">
        <text>(R)-4'-phosphopantetheine + ATP + H(+) = 3'-dephospho-CoA + diphosphate</text>
        <dbReference type="Rhea" id="RHEA:19801"/>
        <dbReference type="ChEBI" id="CHEBI:15378"/>
        <dbReference type="ChEBI" id="CHEBI:30616"/>
        <dbReference type="ChEBI" id="CHEBI:33019"/>
        <dbReference type="ChEBI" id="CHEBI:57328"/>
        <dbReference type="ChEBI" id="CHEBI:61723"/>
        <dbReference type="EC" id="2.7.7.3"/>
    </reaction>
</comment>
<comment type="cofactor">
    <cofactor evidence="1">
        <name>Mg(2+)</name>
        <dbReference type="ChEBI" id="CHEBI:18420"/>
    </cofactor>
</comment>
<comment type="pathway">
    <text evidence="1">Cofactor biosynthesis; coenzyme A biosynthesis; CoA from (R)-pantothenate: step 4/5.</text>
</comment>
<comment type="subunit">
    <text evidence="1">Homohexamer.</text>
</comment>
<comment type="subcellular location">
    <subcellularLocation>
        <location evidence="1">Cytoplasm</location>
    </subcellularLocation>
</comment>
<comment type="similarity">
    <text evidence="1">Belongs to the bacterial CoaD family.</text>
</comment>
<comment type="sequence caution" evidence="2">
    <conflict type="erroneous initiation">
        <sequence resource="EMBL-CDS" id="CAG18647"/>
    </conflict>
</comment>
<protein>
    <recommendedName>
        <fullName evidence="1">Phosphopantetheine adenylyltransferase</fullName>
        <ecNumber evidence="1">2.7.7.3</ecNumber>
    </recommendedName>
    <alternativeName>
        <fullName evidence="1">Dephospho-CoA pyrophosphorylase</fullName>
    </alternativeName>
    <alternativeName>
        <fullName evidence="1">Pantetheine-phosphate adenylyltransferase</fullName>
        <shortName evidence="1">PPAT</shortName>
    </alternativeName>
</protein>
<feature type="chain" id="PRO_0000156251" description="Phosphopantetheine adenylyltransferase">
    <location>
        <begin position="1"/>
        <end position="161"/>
    </location>
</feature>
<feature type="binding site" evidence="1">
    <location>
        <begin position="10"/>
        <end position="11"/>
    </location>
    <ligand>
        <name>ATP</name>
        <dbReference type="ChEBI" id="CHEBI:30616"/>
    </ligand>
</feature>
<feature type="binding site" evidence="1">
    <location>
        <position position="10"/>
    </location>
    <ligand>
        <name>substrate</name>
    </ligand>
</feature>
<feature type="binding site" evidence="1">
    <location>
        <position position="18"/>
    </location>
    <ligand>
        <name>ATP</name>
        <dbReference type="ChEBI" id="CHEBI:30616"/>
    </ligand>
</feature>
<feature type="binding site" evidence="1">
    <location>
        <position position="42"/>
    </location>
    <ligand>
        <name>substrate</name>
    </ligand>
</feature>
<feature type="binding site" evidence="1">
    <location>
        <position position="74"/>
    </location>
    <ligand>
        <name>substrate</name>
    </ligand>
</feature>
<feature type="binding site" evidence="1">
    <location>
        <position position="88"/>
    </location>
    <ligand>
        <name>substrate</name>
    </ligand>
</feature>
<feature type="binding site" evidence="1">
    <location>
        <begin position="89"/>
        <end position="91"/>
    </location>
    <ligand>
        <name>ATP</name>
        <dbReference type="ChEBI" id="CHEBI:30616"/>
    </ligand>
</feature>
<feature type="binding site" evidence="1">
    <location>
        <position position="99"/>
    </location>
    <ligand>
        <name>ATP</name>
        <dbReference type="ChEBI" id="CHEBI:30616"/>
    </ligand>
</feature>
<feature type="binding site" evidence="1">
    <location>
        <begin position="124"/>
        <end position="130"/>
    </location>
    <ligand>
        <name>ATP</name>
        <dbReference type="ChEBI" id="CHEBI:30616"/>
    </ligand>
</feature>
<feature type="site" description="Transition state stabilizer" evidence="1">
    <location>
        <position position="18"/>
    </location>
</feature>
<evidence type="ECO:0000255" key="1">
    <source>
        <dbReference type="HAMAP-Rule" id="MF_00151"/>
    </source>
</evidence>
<evidence type="ECO:0000305" key="2"/>
<accession>Q6LVM8</accession>
<proteinExistence type="inferred from homology"/>